<name>NHAA_BRUC2</name>
<accession>A9M8H1</accession>
<protein>
    <recommendedName>
        <fullName evidence="1">Na(+)/H(+) antiporter NhaA</fullName>
    </recommendedName>
    <alternativeName>
        <fullName evidence="1">Sodium/proton antiporter NhaA</fullName>
    </alternativeName>
</protein>
<feature type="chain" id="PRO_0000334245" description="Na(+)/H(+) antiporter NhaA">
    <location>
        <begin position="1"/>
        <end position="393"/>
    </location>
</feature>
<feature type="transmembrane region" description="Helical" evidence="1">
    <location>
        <begin position="23"/>
        <end position="43"/>
    </location>
</feature>
<feature type="transmembrane region" description="Helical" evidence="1">
    <location>
        <begin position="58"/>
        <end position="78"/>
    </location>
</feature>
<feature type="transmembrane region" description="Helical" evidence="1">
    <location>
        <begin position="96"/>
        <end position="116"/>
    </location>
</feature>
<feature type="transmembrane region" description="Helical" evidence="1">
    <location>
        <begin position="126"/>
        <end position="146"/>
    </location>
</feature>
<feature type="transmembrane region" description="Helical" evidence="1">
    <location>
        <begin position="155"/>
        <end position="175"/>
    </location>
</feature>
<feature type="transmembrane region" description="Helical" evidence="1">
    <location>
        <begin position="178"/>
        <end position="198"/>
    </location>
</feature>
<feature type="transmembrane region" description="Helical" evidence="1">
    <location>
        <begin position="201"/>
        <end position="221"/>
    </location>
</feature>
<feature type="transmembrane region" description="Helical" evidence="1">
    <location>
        <begin position="224"/>
        <end position="244"/>
    </location>
</feature>
<feature type="transmembrane region" description="Helical" evidence="1">
    <location>
        <begin position="265"/>
        <end position="285"/>
    </location>
</feature>
<feature type="transmembrane region" description="Helical" evidence="1">
    <location>
        <begin position="298"/>
        <end position="318"/>
    </location>
</feature>
<feature type="transmembrane region" description="Helical" evidence="1">
    <location>
        <begin position="334"/>
        <end position="354"/>
    </location>
</feature>
<feature type="transmembrane region" description="Helical" evidence="1">
    <location>
        <begin position="367"/>
        <end position="387"/>
    </location>
</feature>
<comment type="function">
    <text evidence="1">Na(+)/H(+) antiporter that extrudes sodium in exchange for external protons.</text>
</comment>
<comment type="catalytic activity">
    <reaction evidence="1">
        <text>Na(+)(in) + 2 H(+)(out) = Na(+)(out) + 2 H(+)(in)</text>
        <dbReference type="Rhea" id="RHEA:29251"/>
        <dbReference type="ChEBI" id="CHEBI:15378"/>
        <dbReference type="ChEBI" id="CHEBI:29101"/>
    </reaction>
    <physiologicalReaction direction="left-to-right" evidence="1">
        <dbReference type="Rhea" id="RHEA:29252"/>
    </physiologicalReaction>
</comment>
<comment type="subcellular location">
    <subcellularLocation>
        <location evidence="1">Cell inner membrane</location>
        <topology evidence="1">Multi-pass membrane protein</topology>
    </subcellularLocation>
</comment>
<comment type="similarity">
    <text evidence="1">Belongs to the NhaA Na(+)/H(+) (TC 2.A.33) antiporter family.</text>
</comment>
<evidence type="ECO:0000255" key="1">
    <source>
        <dbReference type="HAMAP-Rule" id="MF_01844"/>
    </source>
</evidence>
<dbReference type="EMBL" id="CP000872">
    <property type="protein sequence ID" value="ABX61487.1"/>
    <property type="molecule type" value="Genomic_DNA"/>
</dbReference>
<dbReference type="RefSeq" id="WP_004689493.1">
    <property type="nucleotide sequence ID" value="NC_010103.1"/>
</dbReference>
<dbReference type="SMR" id="A9M8H1"/>
<dbReference type="GeneID" id="97534226"/>
<dbReference type="KEGG" id="bcs:BCAN_A0401"/>
<dbReference type="HOGENOM" id="CLU_015803_1_0_5"/>
<dbReference type="PhylomeDB" id="A9M8H1"/>
<dbReference type="Proteomes" id="UP000001385">
    <property type="component" value="Chromosome I"/>
</dbReference>
<dbReference type="GO" id="GO:0005886">
    <property type="term" value="C:plasma membrane"/>
    <property type="evidence" value="ECO:0007669"/>
    <property type="project" value="UniProtKB-SubCell"/>
</dbReference>
<dbReference type="GO" id="GO:0015385">
    <property type="term" value="F:sodium:proton antiporter activity"/>
    <property type="evidence" value="ECO:0007669"/>
    <property type="project" value="TreeGrafter"/>
</dbReference>
<dbReference type="GO" id="GO:0006885">
    <property type="term" value="P:regulation of pH"/>
    <property type="evidence" value="ECO:0007669"/>
    <property type="project" value="InterPro"/>
</dbReference>
<dbReference type="Gene3D" id="1.20.1530.10">
    <property type="entry name" value="Na+/H+ antiporter like domain"/>
    <property type="match status" value="1"/>
</dbReference>
<dbReference type="HAMAP" id="MF_01844">
    <property type="entry name" value="NhaA"/>
    <property type="match status" value="1"/>
</dbReference>
<dbReference type="InterPro" id="IPR023171">
    <property type="entry name" value="Na/H_antiporter_dom_sf"/>
</dbReference>
<dbReference type="InterPro" id="IPR004670">
    <property type="entry name" value="NhaA"/>
</dbReference>
<dbReference type="NCBIfam" id="TIGR00773">
    <property type="entry name" value="NhaA"/>
    <property type="match status" value="1"/>
</dbReference>
<dbReference type="NCBIfam" id="NF007111">
    <property type="entry name" value="PRK09560.1"/>
    <property type="match status" value="1"/>
</dbReference>
<dbReference type="NCBIfam" id="NF007112">
    <property type="entry name" value="PRK09561.1"/>
    <property type="match status" value="1"/>
</dbReference>
<dbReference type="PANTHER" id="PTHR30341:SF0">
    <property type="entry name" value="NA(+)_H(+) ANTIPORTER NHAA"/>
    <property type="match status" value="1"/>
</dbReference>
<dbReference type="PANTHER" id="PTHR30341">
    <property type="entry name" value="SODIUM ION/PROTON ANTIPORTER NHAA-RELATED"/>
    <property type="match status" value="1"/>
</dbReference>
<dbReference type="Pfam" id="PF06965">
    <property type="entry name" value="Na_H_antiport_1"/>
    <property type="match status" value="1"/>
</dbReference>
<reference key="1">
    <citation type="submission" date="2007-10" db="EMBL/GenBank/DDBJ databases">
        <title>Brucella canis ATCC 23365 whole genome shotgun sequencing project.</title>
        <authorList>
            <person name="Setubal J.C."/>
            <person name="Bowns C."/>
            <person name="Boyle S."/>
            <person name="Crasta O.R."/>
            <person name="Czar M.J."/>
            <person name="Dharmanolla C."/>
            <person name="Gillespie J.J."/>
            <person name="Kenyon R.W."/>
            <person name="Lu J."/>
            <person name="Mane S."/>
            <person name="Mohapatra S."/>
            <person name="Nagrani S."/>
            <person name="Purkayastha A."/>
            <person name="Rajasimha H.K."/>
            <person name="Shallom J.M."/>
            <person name="Shallom S."/>
            <person name="Shukla M."/>
            <person name="Snyder E.E."/>
            <person name="Sobral B.W."/>
            <person name="Wattam A.R."/>
            <person name="Will R."/>
            <person name="Williams K."/>
            <person name="Yoo H."/>
            <person name="Bruce D."/>
            <person name="Detter C."/>
            <person name="Munk C."/>
            <person name="Brettin T.S."/>
        </authorList>
    </citation>
    <scope>NUCLEOTIDE SEQUENCE [LARGE SCALE GENOMIC DNA]</scope>
    <source>
        <strain>ATCC 23365 / NCTC 10854 / RM-666</strain>
    </source>
</reference>
<proteinExistence type="inferred from homology"/>
<sequence length="393" mass="41442">MNHSPQSARPVSIMRRFLDSEAAGGITLMAAAALALIVANSPFAQTYFDALHLYIGPLSLAHWINDALMAIFFLLVGLEIKREMLDGQLASWPNRMLPGIAAAGGVILPAIIFAVLNHDNPAKLRGWAVPSATDIAFALGVLSLLGSRAPSSLKVFLATLAILDDLAAVVIIAIFYTAEISMPYLGAAFITAAVLFVMNRMGVVKLLPYLISAVILWFFVFNSGVHATVAGVVAALMIPLKPAPGRPDDMTSPLHKLEHALAKPVAFIVVPIFGFANAGISFKGLEASVLGDTLTLGILLGLFLGKQFGVFGAAWLAIKTGLAEKPMGASWVQLYGVAILCGIGFTMSIFIGLLSFPSDLMQTETKIGVLSGSALSAICGYLLLRAAARPKRG</sequence>
<organism>
    <name type="scientific">Brucella canis (strain ATCC 23365 / NCTC 10854 / RM-666)</name>
    <dbReference type="NCBI Taxonomy" id="483179"/>
    <lineage>
        <taxon>Bacteria</taxon>
        <taxon>Pseudomonadati</taxon>
        <taxon>Pseudomonadota</taxon>
        <taxon>Alphaproteobacteria</taxon>
        <taxon>Hyphomicrobiales</taxon>
        <taxon>Brucellaceae</taxon>
        <taxon>Brucella/Ochrobactrum group</taxon>
        <taxon>Brucella</taxon>
    </lineage>
</organism>
<gene>
    <name evidence="1" type="primary">nhaA</name>
    <name type="ordered locus">BCAN_A0401</name>
</gene>
<keyword id="KW-0050">Antiport</keyword>
<keyword id="KW-0997">Cell inner membrane</keyword>
<keyword id="KW-1003">Cell membrane</keyword>
<keyword id="KW-0406">Ion transport</keyword>
<keyword id="KW-0472">Membrane</keyword>
<keyword id="KW-1185">Reference proteome</keyword>
<keyword id="KW-0915">Sodium</keyword>
<keyword id="KW-0739">Sodium transport</keyword>
<keyword id="KW-0812">Transmembrane</keyword>
<keyword id="KW-1133">Transmembrane helix</keyword>
<keyword id="KW-0813">Transport</keyword>